<accession>Q7CQP8</accession>
<name>LEUE_SALTY</name>
<proteinExistence type="inferred from homology"/>
<reference key="1">
    <citation type="journal article" date="2001" name="Nature">
        <title>Complete genome sequence of Salmonella enterica serovar Typhimurium LT2.</title>
        <authorList>
            <person name="McClelland M."/>
            <person name="Sanderson K.E."/>
            <person name="Spieth J."/>
            <person name="Clifton S.W."/>
            <person name="Latreille P."/>
            <person name="Courtney L."/>
            <person name="Porwollik S."/>
            <person name="Ali J."/>
            <person name="Dante M."/>
            <person name="Du F."/>
            <person name="Hou S."/>
            <person name="Layman D."/>
            <person name="Leonard S."/>
            <person name="Nguyen C."/>
            <person name="Scott K."/>
            <person name="Holmes A."/>
            <person name="Grewal N."/>
            <person name="Mulvaney E."/>
            <person name="Ryan E."/>
            <person name="Sun H."/>
            <person name="Florea L."/>
            <person name="Miller W."/>
            <person name="Stoneking T."/>
            <person name="Nhan M."/>
            <person name="Waterston R."/>
            <person name="Wilson R.K."/>
        </authorList>
    </citation>
    <scope>NUCLEOTIDE SEQUENCE [LARGE SCALE GENOMIC DNA]</scope>
    <source>
        <strain>LT2 / SGSC1412 / ATCC 700720</strain>
    </source>
</reference>
<evidence type="ECO:0000250" key="1">
    <source>
        <dbReference type="UniProtKB" id="P76249"/>
    </source>
</evidence>
<evidence type="ECO:0000255" key="2"/>
<evidence type="ECO:0000305" key="3"/>
<gene>
    <name type="primary">leuE</name>
    <name type="ordered locus">STM1270</name>
</gene>
<sequence>MFAEYGVLNYWTYLVGAIFIVLVPGPNTLFVLKNSVGRGVKGGYLAACGVFIGDAILMFLAYAGVATLIKTTPVLFNIVRYLGAFYLLYLGAKILYATLTSKGRAATETVVPFGAIFKRALILSLTNPKAILFYVSFFVQFIDVTAPHTGVSFFILATTLEIVSFCYLSFLILSGAFVTHYIGTKKKLAKVGNSLIGLLFVGFAARLATLQS</sequence>
<organism>
    <name type="scientific">Salmonella typhimurium (strain LT2 / SGSC1412 / ATCC 700720)</name>
    <dbReference type="NCBI Taxonomy" id="99287"/>
    <lineage>
        <taxon>Bacteria</taxon>
        <taxon>Pseudomonadati</taxon>
        <taxon>Pseudomonadota</taxon>
        <taxon>Gammaproteobacteria</taxon>
        <taxon>Enterobacterales</taxon>
        <taxon>Enterobacteriaceae</taxon>
        <taxon>Salmonella</taxon>
    </lineage>
</organism>
<dbReference type="EMBL" id="AE006468">
    <property type="protein sequence ID" value="AAL20195.1"/>
    <property type="molecule type" value="Genomic_DNA"/>
</dbReference>
<dbReference type="RefSeq" id="WP_000457190.1">
    <property type="nucleotide sequence ID" value="NC_003197.2"/>
</dbReference>
<dbReference type="STRING" id="99287.STM1270"/>
<dbReference type="PaxDb" id="99287-STM1270"/>
<dbReference type="KEGG" id="stm:STM1270"/>
<dbReference type="PATRIC" id="fig|99287.12.peg.1347"/>
<dbReference type="HOGENOM" id="CLU_079569_3_1_6"/>
<dbReference type="OMA" id="AGVWCGD"/>
<dbReference type="PhylomeDB" id="Q7CQP8"/>
<dbReference type="BioCyc" id="SENT99287:STM1270-MONOMER"/>
<dbReference type="Proteomes" id="UP000001014">
    <property type="component" value="Chromosome"/>
</dbReference>
<dbReference type="GO" id="GO:0005886">
    <property type="term" value="C:plasma membrane"/>
    <property type="evidence" value="ECO:0000318"/>
    <property type="project" value="GO_Central"/>
</dbReference>
<dbReference type="GO" id="GO:0015297">
    <property type="term" value="F:antiporter activity"/>
    <property type="evidence" value="ECO:0007669"/>
    <property type="project" value="UniProtKB-KW"/>
</dbReference>
<dbReference type="GO" id="GO:0015190">
    <property type="term" value="F:L-leucine transmembrane transporter activity"/>
    <property type="evidence" value="ECO:0000318"/>
    <property type="project" value="GO_Central"/>
</dbReference>
<dbReference type="GO" id="GO:0015820">
    <property type="term" value="P:L-leucine transport"/>
    <property type="evidence" value="ECO:0000318"/>
    <property type="project" value="GO_Central"/>
</dbReference>
<dbReference type="InterPro" id="IPR001123">
    <property type="entry name" value="LeuE-type"/>
</dbReference>
<dbReference type="NCBIfam" id="NF008201">
    <property type="entry name" value="PRK10958.1"/>
    <property type="match status" value="1"/>
</dbReference>
<dbReference type="PANTHER" id="PTHR30086">
    <property type="entry name" value="ARGININE EXPORTER PROTEIN ARGO"/>
    <property type="match status" value="1"/>
</dbReference>
<dbReference type="PANTHER" id="PTHR30086:SF15">
    <property type="entry name" value="LEUCINE EFFLUX PROTEIN"/>
    <property type="match status" value="1"/>
</dbReference>
<dbReference type="Pfam" id="PF01810">
    <property type="entry name" value="LysE"/>
    <property type="match status" value="1"/>
</dbReference>
<dbReference type="PIRSF" id="PIRSF006324">
    <property type="entry name" value="LeuE"/>
    <property type="match status" value="1"/>
</dbReference>
<feature type="chain" id="PRO_0000316809" description="Leucine efflux protein">
    <location>
        <begin position="1"/>
        <end position="212"/>
    </location>
</feature>
<feature type="transmembrane region" description="Helical" evidence="2">
    <location>
        <begin position="12"/>
        <end position="32"/>
    </location>
</feature>
<feature type="transmembrane region" description="Helical" evidence="2">
    <location>
        <begin position="49"/>
        <end position="69"/>
    </location>
</feature>
<feature type="transmembrane region" description="Helical" evidence="2">
    <location>
        <begin position="81"/>
        <end position="101"/>
    </location>
</feature>
<feature type="transmembrane region" description="Helical" evidence="2">
    <location>
        <begin position="120"/>
        <end position="142"/>
    </location>
</feature>
<feature type="transmembrane region" description="Helical" evidence="2">
    <location>
        <begin position="153"/>
        <end position="173"/>
    </location>
</feature>
<feature type="transmembrane region" description="Helical" evidence="2">
    <location>
        <begin position="188"/>
        <end position="208"/>
    </location>
</feature>
<keyword id="KW-0029">Amino-acid transport</keyword>
<keyword id="KW-0050">Antiport</keyword>
<keyword id="KW-0997">Cell inner membrane</keyword>
<keyword id="KW-1003">Cell membrane</keyword>
<keyword id="KW-0472">Membrane</keyword>
<keyword id="KW-1185">Reference proteome</keyword>
<keyword id="KW-0812">Transmembrane</keyword>
<keyword id="KW-1133">Transmembrane helix</keyword>
<keyword id="KW-0813">Transport</keyword>
<comment type="function">
    <text evidence="1">Exporter of leucine.</text>
</comment>
<comment type="catalytic activity">
    <reaction evidence="1">
        <text>L-leucine(in) + H(+)(out) = L-leucine(out) + H(+)(in)</text>
        <dbReference type="Rhea" id="RHEA:28731"/>
        <dbReference type="ChEBI" id="CHEBI:15378"/>
        <dbReference type="ChEBI" id="CHEBI:57427"/>
    </reaction>
    <physiologicalReaction direction="left-to-right" evidence="1">
        <dbReference type="Rhea" id="RHEA:28732"/>
    </physiologicalReaction>
</comment>
<comment type="subcellular location">
    <subcellularLocation>
        <location evidence="1">Cell inner membrane</location>
        <topology evidence="2">Multi-pass membrane protein</topology>
    </subcellularLocation>
</comment>
<comment type="similarity">
    <text evidence="3">Belongs to the Rht family.</text>
</comment>
<protein>
    <recommendedName>
        <fullName evidence="1">Leucine efflux protein</fullName>
    </recommendedName>
</protein>